<evidence type="ECO:0000255" key="1">
    <source>
        <dbReference type="HAMAP-Rule" id="MF_00502"/>
    </source>
</evidence>
<evidence type="ECO:0000305" key="2"/>
<proteinExistence type="inferred from homology"/>
<reference key="1">
    <citation type="journal article" date="2008" name="J. Bacteriol.">
        <title>Complete genome sequence of the soil actinomycete Kocuria rhizophila.</title>
        <authorList>
            <person name="Takarada H."/>
            <person name="Sekine M."/>
            <person name="Kosugi H."/>
            <person name="Matsuo Y."/>
            <person name="Fujisawa T."/>
            <person name="Omata S."/>
            <person name="Kishi E."/>
            <person name="Shimizu A."/>
            <person name="Tsukatani N."/>
            <person name="Tanikawa S."/>
            <person name="Fujita N."/>
            <person name="Harayama S."/>
        </authorList>
    </citation>
    <scope>NUCLEOTIDE SEQUENCE [LARGE SCALE GENOMIC DNA]</scope>
    <source>
        <strain>ATCC 9341 / DSM 348 / NBRC 103217 / DC2201</strain>
    </source>
</reference>
<comment type="subunit">
    <text evidence="1">Part of the 50S ribosomal subunit.</text>
</comment>
<comment type="similarity">
    <text evidence="1">Belongs to the bacterial ribosomal protein bL31 family. Type B subfamily.</text>
</comment>
<gene>
    <name evidence="1" type="primary">rpmE2</name>
    <name type="ordered locus">KRH_12490</name>
</gene>
<feature type="chain" id="PRO_1000126812" description="Large ribosomal subunit protein bL31B">
    <location>
        <begin position="1"/>
        <end position="85"/>
    </location>
</feature>
<accession>B2GHC3</accession>
<organism>
    <name type="scientific">Kocuria rhizophila (strain ATCC 9341 / DSM 348 / NBRC 103217 / DC2201)</name>
    <dbReference type="NCBI Taxonomy" id="378753"/>
    <lineage>
        <taxon>Bacteria</taxon>
        <taxon>Bacillati</taxon>
        <taxon>Actinomycetota</taxon>
        <taxon>Actinomycetes</taxon>
        <taxon>Micrococcales</taxon>
        <taxon>Micrococcaceae</taxon>
        <taxon>Kocuria</taxon>
    </lineage>
</organism>
<sequence length="85" mass="9723">MKADIHPDYHPVLFRDLASGKVILTRSTATSSKTETWEDGDEYPIIEVEISSESHPFYTGKQRIMDSAGRVERFNQRFANFGKSK</sequence>
<protein>
    <recommendedName>
        <fullName evidence="1">Large ribosomal subunit protein bL31B</fullName>
    </recommendedName>
    <alternativeName>
        <fullName evidence="2">50S ribosomal protein L31 type B</fullName>
    </alternativeName>
</protein>
<keyword id="KW-1185">Reference proteome</keyword>
<keyword id="KW-0687">Ribonucleoprotein</keyword>
<keyword id="KW-0689">Ribosomal protein</keyword>
<dbReference type="EMBL" id="AP009152">
    <property type="protein sequence ID" value="BAG29596.1"/>
    <property type="molecule type" value="Genomic_DNA"/>
</dbReference>
<dbReference type="RefSeq" id="WP_012398317.1">
    <property type="nucleotide sequence ID" value="NC_010617.1"/>
</dbReference>
<dbReference type="SMR" id="B2GHC3"/>
<dbReference type="STRING" id="378753.KRH_12490"/>
<dbReference type="KEGG" id="krh:KRH_12490"/>
<dbReference type="eggNOG" id="COG0254">
    <property type="taxonomic scope" value="Bacteria"/>
</dbReference>
<dbReference type="HOGENOM" id="CLU_114306_2_2_11"/>
<dbReference type="OrthoDB" id="9803251at2"/>
<dbReference type="Proteomes" id="UP000008838">
    <property type="component" value="Chromosome"/>
</dbReference>
<dbReference type="GO" id="GO:1990904">
    <property type="term" value="C:ribonucleoprotein complex"/>
    <property type="evidence" value="ECO:0007669"/>
    <property type="project" value="UniProtKB-KW"/>
</dbReference>
<dbReference type="GO" id="GO:0005840">
    <property type="term" value="C:ribosome"/>
    <property type="evidence" value="ECO:0007669"/>
    <property type="project" value="UniProtKB-KW"/>
</dbReference>
<dbReference type="GO" id="GO:0003735">
    <property type="term" value="F:structural constituent of ribosome"/>
    <property type="evidence" value="ECO:0007669"/>
    <property type="project" value="InterPro"/>
</dbReference>
<dbReference type="GO" id="GO:0006412">
    <property type="term" value="P:translation"/>
    <property type="evidence" value="ECO:0007669"/>
    <property type="project" value="UniProtKB-UniRule"/>
</dbReference>
<dbReference type="Gene3D" id="4.10.830.30">
    <property type="entry name" value="Ribosomal protein L31"/>
    <property type="match status" value="1"/>
</dbReference>
<dbReference type="HAMAP" id="MF_00502">
    <property type="entry name" value="Ribosomal_bL31_2"/>
    <property type="match status" value="1"/>
</dbReference>
<dbReference type="InterPro" id="IPR034704">
    <property type="entry name" value="Ribosomal_bL28/bL31-like_sf"/>
</dbReference>
<dbReference type="InterPro" id="IPR002150">
    <property type="entry name" value="Ribosomal_bL31"/>
</dbReference>
<dbReference type="InterPro" id="IPR027493">
    <property type="entry name" value="Ribosomal_bL31_B"/>
</dbReference>
<dbReference type="InterPro" id="IPR042105">
    <property type="entry name" value="Ribosomal_bL31_sf"/>
</dbReference>
<dbReference type="NCBIfam" id="TIGR00105">
    <property type="entry name" value="L31"/>
    <property type="match status" value="1"/>
</dbReference>
<dbReference type="NCBIfam" id="NF001809">
    <property type="entry name" value="PRK00528.1"/>
    <property type="match status" value="1"/>
</dbReference>
<dbReference type="NCBIfam" id="NF002462">
    <property type="entry name" value="PRK01678.1"/>
    <property type="match status" value="1"/>
</dbReference>
<dbReference type="PANTHER" id="PTHR33280">
    <property type="entry name" value="50S RIBOSOMAL PROTEIN L31, CHLOROPLASTIC"/>
    <property type="match status" value="1"/>
</dbReference>
<dbReference type="PANTHER" id="PTHR33280:SF1">
    <property type="entry name" value="LARGE RIBOSOMAL SUBUNIT PROTEIN BL31C"/>
    <property type="match status" value="1"/>
</dbReference>
<dbReference type="Pfam" id="PF01197">
    <property type="entry name" value="Ribosomal_L31"/>
    <property type="match status" value="1"/>
</dbReference>
<dbReference type="PRINTS" id="PR01249">
    <property type="entry name" value="RIBOSOMALL31"/>
</dbReference>
<dbReference type="SUPFAM" id="SSF143800">
    <property type="entry name" value="L28p-like"/>
    <property type="match status" value="1"/>
</dbReference>
<dbReference type="PROSITE" id="PS01143">
    <property type="entry name" value="RIBOSOMAL_L31"/>
    <property type="match status" value="1"/>
</dbReference>
<name>RL31B_KOCRD</name>